<name>Y15_BPT7</name>
<sequence length="29" mass="3175">MMYLMPLLIVIVGCLALHCSDDDMPDGHA</sequence>
<keyword id="KW-1185">Reference proteome</keyword>
<protein>
    <recommendedName>
        <fullName>Protein 1.5</fullName>
    </recommendedName>
    <alternativeName>
        <fullName>Gene product 1.5</fullName>
        <shortName>Gp1.5</shortName>
    </alternativeName>
</protein>
<gene>
    <name type="ordered locus">1.5</name>
</gene>
<dbReference type="EMBL" id="V01146">
    <property type="protein sequence ID" value="CAA24395.1"/>
    <property type="molecule type" value="Genomic_DNA"/>
</dbReference>
<dbReference type="EMBL" id="V01127">
    <property type="protein sequence ID" value="CAA24338.1"/>
    <property type="molecule type" value="Genomic_DNA"/>
</dbReference>
<dbReference type="EMBL" id="M25443">
    <property type="protein sequence ID" value="AAA32566.1"/>
    <property type="molecule type" value="Genomic_DNA"/>
</dbReference>
<dbReference type="PIR" id="I43002">
    <property type="entry name" value="Q1BP57"/>
</dbReference>
<dbReference type="RefSeq" id="NP_041965.1">
    <property type="nucleotide sequence ID" value="NC_001604.1"/>
</dbReference>
<dbReference type="KEGG" id="vg:1261074"/>
<dbReference type="Proteomes" id="UP000000840">
    <property type="component" value="Genome"/>
</dbReference>
<feature type="chain" id="PRO_0000106473" description="Protein 1.5">
    <location>
        <begin position="1"/>
        <end position="29"/>
    </location>
</feature>
<reference key="1">
    <citation type="journal article" date="1983" name="J. Mol. Biol.">
        <title>Complete nucleotide sequence of bacteriophage T7 DNA and the locations of T7 genetic elements.</title>
        <authorList>
            <person name="Dunn J.J."/>
            <person name="Studier F.W."/>
        </authorList>
    </citation>
    <scope>NUCLEOTIDE SEQUENCE [LARGE SCALE GENOMIC DNA]</scope>
</reference>
<reference key="2">
    <citation type="journal article" date="1981" name="J. Mol. Biol.">
        <title>Nucleotide sequence from the genetic left end of bacteriophage T7 DNA to the beginning of gene 4.</title>
        <authorList>
            <person name="Dunn J.J."/>
            <person name="Studier F.W."/>
        </authorList>
    </citation>
    <scope>NUCLEOTIDE SEQUENCE [GENOMIC DNA]</scope>
</reference>
<reference key="3">
    <citation type="journal article" date="1979" name="Nucleic Acids Res.">
        <title>New genes and promoters suggested by the DNA sequence near the end of the coliphage T7 early operon.</title>
        <authorList>
            <person name="Boothroyd J.C."/>
            <person name="Hayward R.S."/>
        </authorList>
    </citation>
    <scope>NUCLEOTIDE SEQUENCE [GENOMIC DNA]</scope>
</reference>
<organism>
    <name type="scientific">Escherichia phage T7</name>
    <name type="common">Bacteriophage T7</name>
    <dbReference type="NCBI Taxonomy" id="10760"/>
    <lineage>
        <taxon>Viruses</taxon>
        <taxon>Duplodnaviria</taxon>
        <taxon>Heunggongvirae</taxon>
        <taxon>Uroviricota</taxon>
        <taxon>Caudoviricetes</taxon>
        <taxon>Autographiviridae</taxon>
        <taxon>Studiervirinae</taxon>
        <taxon>Teseptimavirus</taxon>
        <taxon>Teseptimavirus T7</taxon>
    </lineage>
</organism>
<proteinExistence type="predicted"/>
<organismHost>
    <name type="scientific">Escherichia coli</name>
    <dbReference type="NCBI Taxonomy" id="562"/>
</organismHost>
<accession>P03792</accession>